<keyword id="KW-0051">Antiviral defense</keyword>
<keyword id="KW-0202">Cytokine</keyword>
<keyword id="KW-0325">Glycoprotein</keyword>
<keyword id="KW-0341">Growth regulation</keyword>
<keyword id="KW-0873">Pyrrolidone carboxylic acid</keyword>
<keyword id="KW-1185">Reference proteome</keyword>
<keyword id="KW-0964">Secreted</keyword>
<keyword id="KW-0732">Signal</keyword>
<proteinExistence type="evidence at transcript level"/>
<accession>P63309</accession>
<accession>P42163</accession>
<accession>P42164</accession>
<evidence type="ECO:0000250" key="1"/>
<evidence type="ECO:0000250" key="2">
    <source>
        <dbReference type="UniProtKB" id="P01579"/>
    </source>
</evidence>
<evidence type="ECO:0000250" key="3">
    <source>
        <dbReference type="UniProtKB" id="P01580"/>
    </source>
</evidence>
<evidence type="ECO:0000255" key="4"/>
<evidence type="ECO:0000305" key="5"/>
<comment type="function">
    <text evidence="2 3">Type II interferon produced by immune cells such as T-cells and NK cells that plays crucial roles in antimicrobial, antiviral, and antitumor responses by activating effector immune cells and enhancing antigen presentation. Primarily signals through the JAK-STAT pathway after interaction with its receptor IFNGR1 to affect gene regulation. Upon IFNG binding, IFNGR1 intracellular domain opens out to allow association of downstream signaling components JAK2, JAK1 and STAT1, leading to STAT1 activation, nuclear translocation and transcription of IFNG-regulated genes. Many of the induced genes are transcription factors such as IRF1 that are able to further drive regulation of a next wave of transcription. Plays a role in class I antigen presentation pathway by inducing a replacement of catalytic proteasome subunits with immunoproteasome subunits. In turn, increases the quantity, quality, and repertoire of peptides for class I MHC loading. Increases the efficiency of peptide generation also by inducing the expression of activator PA28 that associates with the proteasome and alters its proteolytic cleavage preference. Up-regulates as well MHC II complexes on the cell surface by promoting expression of several key molecules such as cathepsins B/CTSB, H/CTSH, and L/CTSL (By similarity). Participates in the regulation of hematopoietic stem cells during development and under homeostatic conditions by affecting their development, quiescence, and differentiation (By similarity).</text>
</comment>
<comment type="subunit">
    <text evidence="2">Homodimer. Interacts with IFNGR1 (via extracellular domain); this interaction promotes IFNGR1 dimerization.</text>
</comment>
<comment type="subcellular location">
    <subcellularLocation>
        <location evidence="2">Secreted</location>
    </subcellularLocation>
</comment>
<comment type="tissue specificity">
    <text>Released primarily from activated T lymphocytes.</text>
</comment>
<comment type="similarity">
    <text evidence="5">Belongs to the type II (or gamma) interferon family.</text>
</comment>
<organism>
    <name type="scientific">Macaca fascicularis</name>
    <name type="common">Crab-eating macaque</name>
    <name type="synonym">Cynomolgus monkey</name>
    <dbReference type="NCBI Taxonomy" id="9541"/>
    <lineage>
        <taxon>Eukaryota</taxon>
        <taxon>Metazoa</taxon>
        <taxon>Chordata</taxon>
        <taxon>Craniata</taxon>
        <taxon>Vertebrata</taxon>
        <taxon>Euteleostomi</taxon>
        <taxon>Mammalia</taxon>
        <taxon>Eutheria</taxon>
        <taxon>Euarchontoglires</taxon>
        <taxon>Primates</taxon>
        <taxon>Haplorrhini</taxon>
        <taxon>Catarrhini</taxon>
        <taxon>Cercopithecidae</taxon>
        <taxon>Cercopithecinae</taxon>
        <taxon>Macaca</taxon>
    </lineage>
</organism>
<gene>
    <name type="primary">IFNG</name>
</gene>
<reference key="1">
    <citation type="journal article" date="1997" name="Int. Arch. Allergy Immunol.">
        <title>Molecular cloning and expression of cynomolgus monkey interferon-gamma cDNA.</title>
        <authorList>
            <person name="Tatsumi M."/>
            <person name="Sata T."/>
        </authorList>
    </citation>
    <scope>NUCLEOTIDE SEQUENCE [MRNA]</scope>
</reference>
<protein>
    <recommendedName>
        <fullName>Interferon gamma</fullName>
        <shortName>IFN-gamma</shortName>
    </recommendedName>
</protein>
<name>IFNG_MACFA</name>
<feature type="signal peptide" evidence="1">
    <location>
        <begin position="1"/>
        <end position="23"/>
    </location>
</feature>
<feature type="chain" id="PRO_0000016446" description="Interferon gamma">
    <location>
        <begin position="24"/>
        <end position="165"/>
    </location>
</feature>
<feature type="modified residue" description="Pyrrolidone carboxylic acid" evidence="2">
    <location>
        <position position="24"/>
    </location>
</feature>
<feature type="glycosylation site" description="N-linked (GlcNAc...) asparagine" evidence="4">
    <location>
        <position position="48"/>
    </location>
</feature>
<feature type="glycosylation site" description="N-linked (GlcNAc...) asparagine" evidence="4">
    <location>
        <position position="120"/>
    </location>
</feature>
<dbReference type="EMBL" id="D89985">
    <property type="protein sequence ID" value="BAA14050.1"/>
    <property type="molecule type" value="mRNA"/>
</dbReference>
<dbReference type="RefSeq" id="NP_001274586.1">
    <property type="nucleotide sequence ID" value="NM_001287657.1"/>
</dbReference>
<dbReference type="RefSeq" id="XP_045221510.1">
    <property type="nucleotide sequence ID" value="XM_045365575.2"/>
</dbReference>
<dbReference type="SMR" id="P63309"/>
<dbReference type="STRING" id="9541.ENSMFAP00000024297"/>
<dbReference type="GlyCosmos" id="P63309">
    <property type="glycosylation" value="2 sites, No reported glycans"/>
</dbReference>
<dbReference type="Ensembl" id="ENSMFAT00000081861.1">
    <property type="protein sequence ID" value="ENSMFAP00000053609.1"/>
    <property type="gene ID" value="ENSMFAG00000053200.1"/>
</dbReference>
<dbReference type="GeneID" id="102128291"/>
<dbReference type="VEuPathDB" id="HostDB:ENSMFAG00000043748"/>
<dbReference type="eggNOG" id="ENOG502SBGW">
    <property type="taxonomic scope" value="Eukaryota"/>
</dbReference>
<dbReference type="GeneTree" id="ENSGT00390000007831"/>
<dbReference type="OMA" id="QIVSMYL"/>
<dbReference type="Proteomes" id="UP000233100">
    <property type="component" value="Chromosome 11"/>
</dbReference>
<dbReference type="GO" id="GO:0005615">
    <property type="term" value="C:extracellular space"/>
    <property type="evidence" value="ECO:0007669"/>
    <property type="project" value="UniProtKB-KW"/>
</dbReference>
<dbReference type="GO" id="GO:0005125">
    <property type="term" value="F:cytokine activity"/>
    <property type="evidence" value="ECO:0007669"/>
    <property type="project" value="UniProtKB-KW"/>
</dbReference>
<dbReference type="GO" id="GO:0005133">
    <property type="term" value="F:type II interferon receptor binding"/>
    <property type="evidence" value="ECO:0007669"/>
    <property type="project" value="InterPro"/>
</dbReference>
<dbReference type="GO" id="GO:0002250">
    <property type="term" value="P:adaptive immune response"/>
    <property type="evidence" value="ECO:0007669"/>
    <property type="project" value="TreeGrafter"/>
</dbReference>
<dbReference type="GO" id="GO:0048143">
    <property type="term" value="P:astrocyte activation"/>
    <property type="evidence" value="ECO:0007669"/>
    <property type="project" value="Ensembl"/>
</dbReference>
<dbReference type="GO" id="GO:0097696">
    <property type="term" value="P:cell surface receptor signaling pathway via STAT"/>
    <property type="evidence" value="ECO:0007669"/>
    <property type="project" value="Ensembl"/>
</dbReference>
<dbReference type="GO" id="GO:0051607">
    <property type="term" value="P:defense response to virus"/>
    <property type="evidence" value="ECO:0007669"/>
    <property type="project" value="UniProtKB-KW"/>
</dbReference>
<dbReference type="GO" id="GO:0097191">
    <property type="term" value="P:extrinsic apoptotic signaling pathway"/>
    <property type="evidence" value="ECO:0007669"/>
    <property type="project" value="Ensembl"/>
</dbReference>
<dbReference type="GO" id="GO:0038096">
    <property type="term" value="P:Fc-gamma receptor signaling pathway involved in phagocytosis"/>
    <property type="evidence" value="ECO:0007669"/>
    <property type="project" value="Ensembl"/>
</dbReference>
<dbReference type="GO" id="GO:0006959">
    <property type="term" value="P:humoral immune response"/>
    <property type="evidence" value="ECO:0007669"/>
    <property type="project" value="TreeGrafter"/>
</dbReference>
<dbReference type="GO" id="GO:0002281">
    <property type="term" value="P:macrophage activation involved in immune response"/>
    <property type="evidence" value="ECO:0007669"/>
    <property type="project" value="Ensembl"/>
</dbReference>
<dbReference type="GO" id="GO:0030225">
    <property type="term" value="P:macrophage differentiation"/>
    <property type="evidence" value="ECO:0007669"/>
    <property type="project" value="Ensembl"/>
</dbReference>
<dbReference type="GO" id="GO:0001774">
    <property type="term" value="P:microglial cell activation"/>
    <property type="evidence" value="ECO:0007669"/>
    <property type="project" value="Ensembl"/>
</dbReference>
<dbReference type="GO" id="GO:0045892">
    <property type="term" value="P:negative regulation of DNA-templated transcription"/>
    <property type="evidence" value="ECO:0007669"/>
    <property type="project" value="Ensembl"/>
</dbReference>
<dbReference type="GO" id="GO:0032700">
    <property type="term" value="P:negative regulation of interleukin-17 production"/>
    <property type="evidence" value="ECO:0007669"/>
    <property type="project" value="Ensembl"/>
</dbReference>
<dbReference type="GO" id="GO:0048662">
    <property type="term" value="P:negative regulation of smooth muscle cell proliferation"/>
    <property type="evidence" value="ECO:0007669"/>
    <property type="project" value="Ensembl"/>
</dbReference>
<dbReference type="GO" id="GO:1902004">
    <property type="term" value="P:positive regulation of amyloid-beta formation"/>
    <property type="evidence" value="ECO:0007669"/>
    <property type="project" value="Ensembl"/>
</dbReference>
<dbReference type="GO" id="GO:0010508">
    <property type="term" value="P:positive regulation of autophagy"/>
    <property type="evidence" value="ECO:0000250"/>
    <property type="project" value="UniProtKB"/>
</dbReference>
<dbReference type="GO" id="GO:0032834">
    <property type="term" value="P:positive regulation of CD4-positive, CD25-positive, alpha-beta regulatory T cell differentiation involved in immune response"/>
    <property type="evidence" value="ECO:0007669"/>
    <property type="project" value="Ensembl"/>
</dbReference>
<dbReference type="GO" id="GO:0032722">
    <property type="term" value="P:positive regulation of chemokine production"/>
    <property type="evidence" value="ECO:0007669"/>
    <property type="project" value="Ensembl"/>
</dbReference>
<dbReference type="GO" id="GO:0010634">
    <property type="term" value="P:positive regulation of epithelial cell migration"/>
    <property type="evidence" value="ECO:0007669"/>
    <property type="project" value="Ensembl"/>
</dbReference>
<dbReference type="GO" id="GO:0060552">
    <property type="term" value="P:positive regulation of fructose 1,6-bisphosphate metabolic process"/>
    <property type="evidence" value="ECO:0007669"/>
    <property type="project" value="Ensembl"/>
</dbReference>
<dbReference type="GO" id="GO:0050729">
    <property type="term" value="P:positive regulation of inflammatory response"/>
    <property type="evidence" value="ECO:0007669"/>
    <property type="project" value="Ensembl"/>
</dbReference>
<dbReference type="GO" id="GO:0032735">
    <property type="term" value="P:positive regulation of interleukin-12 production"/>
    <property type="evidence" value="ECO:0007669"/>
    <property type="project" value="Ensembl"/>
</dbReference>
<dbReference type="GO" id="GO:0032747">
    <property type="term" value="P:positive regulation of interleukin-23 production"/>
    <property type="evidence" value="ECO:0007669"/>
    <property type="project" value="Ensembl"/>
</dbReference>
<dbReference type="GO" id="GO:0032755">
    <property type="term" value="P:positive regulation of interleukin-6 production"/>
    <property type="evidence" value="ECO:0007669"/>
    <property type="project" value="Ensembl"/>
</dbReference>
<dbReference type="GO" id="GO:0051044">
    <property type="term" value="P:positive regulation of membrane protein ectodomain proteolysis"/>
    <property type="evidence" value="ECO:0007669"/>
    <property type="project" value="Ensembl"/>
</dbReference>
<dbReference type="GO" id="GO:0050769">
    <property type="term" value="P:positive regulation of neurogenesis"/>
    <property type="evidence" value="ECO:0007669"/>
    <property type="project" value="Ensembl"/>
</dbReference>
<dbReference type="GO" id="GO:0045429">
    <property type="term" value="P:positive regulation of nitric oxide biosynthetic process"/>
    <property type="evidence" value="ECO:0007669"/>
    <property type="project" value="Ensembl"/>
</dbReference>
<dbReference type="GO" id="GO:0045672">
    <property type="term" value="P:positive regulation of osteoclast differentiation"/>
    <property type="evidence" value="ECO:0007669"/>
    <property type="project" value="Ensembl"/>
</dbReference>
<dbReference type="GO" id="GO:0042307">
    <property type="term" value="P:positive regulation of protein import into nucleus"/>
    <property type="evidence" value="ECO:0007669"/>
    <property type="project" value="Ensembl"/>
</dbReference>
<dbReference type="GO" id="GO:0031334">
    <property type="term" value="P:positive regulation of protein-containing complex assembly"/>
    <property type="evidence" value="ECO:0007669"/>
    <property type="project" value="Ensembl"/>
</dbReference>
<dbReference type="GO" id="GO:0034393">
    <property type="term" value="P:positive regulation of smooth muscle cell apoptotic process"/>
    <property type="evidence" value="ECO:0007669"/>
    <property type="project" value="Ensembl"/>
</dbReference>
<dbReference type="GO" id="GO:2000309">
    <property type="term" value="P:positive regulation of tumor necrosis factor (ligand) superfamily member 11 production"/>
    <property type="evidence" value="ECO:0007669"/>
    <property type="project" value="Ensembl"/>
</dbReference>
<dbReference type="GO" id="GO:0060557">
    <property type="term" value="P:positive regulation of vitamin D biosynthetic process"/>
    <property type="evidence" value="ECO:0007669"/>
    <property type="project" value="Ensembl"/>
</dbReference>
<dbReference type="GO" id="GO:0050796">
    <property type="term" value="P:regulation of insulin secretion"/>
    <property type="evidence" value="ECO:0007669"/>
    <property type="project" value="Ensembl"/>
</dbReference>
<dbReference type="GO" id="GO:0060333">
    <property type="term" value="P:type II interferon-mediated signaling pathway"/>
    <property type="evidence" value="ECO:0007669"/>
    <property type="project" value="Ensembl"/>
</dbReference>
<dbReference type="GO" id="GO:0038196">
    <property type="term" value="P:type III interferon-mediated signaling pathway"/>
    <property type="evidence" value="ECO:0007669"/>
    <property type="project" value="Ensembl"/>
</dbReference>
<dbReference type="FunFam" id="1.20.1250.10:FF:000007">
    <property type="entry name" value="Interferon gamma"/>
    <property type="match status" value="1"/>
</dbReference>
<dbReference type="Gene3D" id="1.20.1250.10">
    <property type="match status" value="1"/>
</dbReference>
<dbReference type="InterPro" id="IPR009079">
    <property type="entry name" value="4_helix_cytokine-like_core"/>
</dbReference>
<dbReference type="InterPro" id="IPR002069">
    <property type="entry name" value="Interferon_gamma"/>
</dbReference>
<dbReference type="PANTHER" id="PTHR11419">
    <property type="entry name" value="INTERFERON GAMMA"/>
    <property type="match status" value="1"/>
</dbReference>
<dbReference type="PANTHER" id="PTHR11419:SF0">
    <property type="entry name" value="INTERFERON GAMMA"/>
    <property type="match status" value="1"/>
</dbReference>
<dbReference type="Pfam" id="PF00714">
    <property type="entry name" value="IFN-gamma"/>
    <property type="match status" value="1"/>
</dbReference>
<dbReference type="PIRSF" id="PIRSF001936">
    <property type="entry name" value="IFN-gamma"/>
    <property type="match status" value="1"/>
</dbReference>
<dbReference type="SUPFAM" id="SSF47266">
    <property type="entry name" value="4-helical cytokines"/>
    <property type="match status" value="1"/>
</dbReference>
<sequence>MKYTSYILAFQLCIVLGSLGCYCQDPYVKEAENLKKYFNAGDPDVADNGTLFLDILRNWKEESDRKIMQSQIVSFYFKLFKNFKDDQRIQKSVETIKEDINVKFFNSNKKKRDDFEKLTNYSVTDSNVQRKAVHELIQVMAELSPAAKIGKRKRSQMFRGRRASQ</sequence>